<comment type="function">
    <text>May be involved in transcriptional regulation.</text>
</comment>
<comment type="interaction">
    <interactant intactId="EBI-7233259">
        <id>Q86UD4</id>
    </interactant>
    <interactant intactId="EBI-3866279">
        <id>Q9BWT7</id>
        <label>CARD10</label>
    </interactant>
    <organismsDiffer>false</organismsDiffer>
    <experiments>3</experiments>
</comment>
<comment type="interaction">
    <interactant intactId="EBI-7233259">
        <id>Q86UD4</id>
    </interactant>
    <interactant intactId="EBI-739624">
        <id>Q8NHQ1</id>
        <label>CEP70</label>
    </interactant>
    <organismsDiffer>false</organismsDiffer>
    <experiments>7</experiments>
</comment>
<comment type="interaction">
    <interactant intactId="EBI-7233259">
        <id>Q86UD4</id>
    </interactant>
    <interactant intactId="EBI-10292696">
        <id>Q96Q77</id>
        <label>CIB3</label>
    </interactant>
    <organismsDiffer>false</organismsDiffer>
    <experiments>3</experiments>
</comment>
<comment type="interaction">
    <interactant intactId="EBI-7233259">
        <id>Q86UD4</id>
    </interactant>
    <interactant intactId="EBI-489887">
        <id>P50402</id>
        <label>EMD</label>
    </interactant>
    <organismsDiffer>false</organismsDiffer>
    <experiments>3</experiments>
</comment>
<comment type="interaction">
    <interactant intactId="EBI-7233259">
        <id>Q86UD4</id>
    </interactant>
    <interactant intactId="EBI-81610">
        <id>O15287</id>
        <label>FANCG</label>
    </interactant>
    <organismsDiffer>false</organismsDiffer>
    <experiments>3</experiments>
</comment>
<comment type="interaction">
    <interactant intactId="EBI-7233259">
        <id>Q86UD4</id>
    </interactant>
    <interactant intactId="EBI-5916454">
        <id>A6NEM1</id>
        <label>GOLGA6L9</label>
    </interactant>
    <organismsDiffer>false</organismsDiffer>
    <experiments>3</experiments>
</comment>
<comment type="interaction">
    <interactant intactId="EBI-7233259">
        <id>Q86UD4</id>
    </interactant>
    <interactant intactId="EBI-715394">
        <id>Q9H079</id>
        <label>KATNBL1</label>
    </interactant>
    <organismsDiffer>false</organismsDiffer>
    <experiments>3</experiments>
</comment>
<comment type="interaction">
    <interactant intactId="EBI-7233259">
        <id>Q86UD4</id>
    </interactant>
    <interactant intactId="EBI-10171697">
        <id>Q6A162</id>
        <label>KRT40</label>
    </interactant>
    <organismsDiffer>false</organismsDiffer>
    <experiments>3</experiments>
</comment>
<comment type="interaction">
    <interactant intactId="EBI-7233259">
        <id>Q86UD4</id>
    </interactant>
    <interactant intactId="EBI-10172150">
        <id>P60370</id>
        <label>KRTAP10-5</label>
    </interactant>
    <organismsDiffer>false</organismsDiffer>
    <experiments>3</experiments>
</comment>
<comment type="interaction">
    <interactant intactId="EBI-7233259">
        <id>Q86UD4</id>
    </interactant>
    <interactant intactId="EBI-10172290">
        <id>P60409</id>
        <label>KRTAP10-7</label>
    </interactant>
    <organismsDiffer>false</organismsDiffer>
    <experiments>3</experiments>
</comment>
<comment type="interaction">
    <interactant intactId="EBI-7233259">
        <id>Q86UD4</id>
    </interactant>
    <interactant intactId="EBI-748397">
        <id>P50222</id>
        <label>MEOX2</label>
    </interactant>
    <organismsDiffer>false</organismsDiffer>
    <experiments>3</experiments>
</comment>
<comment type="interaction">
    <interactant intactId="EBI-7233259">
        <id>Q86UD4</id>
    </interactant>
    <interactant intactId="EBI-742948">
        <id>Q5JR59</id>
        <label>MTUS2</label>
    </interactant>
    <organismsDiffer>false</organismsDiffer>
    <experiments>3</experiments>
</comment>
<comment type="interaction">
    <interactant intactId="EBI-7233259">
        <id>Q86UD4</id>
    </interactant>
    <interactant intactId="EBI-11522433">
        <id>Q5JR59-3</id>
        <label>MTUS2</label>
    </interactant>
    <organismsDiffer>false</organismsDiffer>
    <experiments>4</experiments>
</comment>
<comment type="interaction">
    <interactant intactId="EBI-7233259">
        <id>Q86UD4</id>
    </interactant>
    <interactant intactId="EBI-748974">
        <id>Q96CV9</id>
        <label>OPTN</label>
    </interactant>
    <organismsDiffer>false</organismsDiffer>
    <experiments>3</experiments>
</comment>
<comment type="interaction">
    <interactant intactId="EBI-7233259">
        <id>Q86UD4</id>
    </interactant>
    <interactant intactId="EBI-79165">
        <id>Q9NRD5</id>
        <label>PICK1</label>
    </interactant>
    <organismsDiffer>false</organismsDiffer>
    <experiments>3</experiments>
</comment>
<comment type="interaction">
    <interactant intactId="EBI-7233259">
        <id>Q86UD4</id>
    </interactant>
    <interactant intactId="EBI-2805516">
        <id>P31321</id>
        <label>PRKAR1B</label>
    </interactant>
    <organismsDiffer>false</organismsDiffer>
    <experiments>3</experiments>
</comment>
<comment type="interaction">
    <interactant intactId="EBI-7233259">
        <id>Q86UD4</id>
    </interactant>
    <interactant intactId="EBI-11018037">
        <id>Q13470-2</id>
        <label>TNK1</label>
    </interactant>
    <organismsDiffer>false</organismsDiffer>
    <experiments>3</experiments>
</comment>
<comment type="interaction">
    <interactant intactId="EBI-7233259">
        <id>Q86UD4</id>
    </interactant>
    <interactant intactId="EBI-741602">
        <id>O94972</id>
        <label>TRIM37</label>
    </interactant>
    <organismsDiffer>false</organismsDiffer>
    <experiments>3</experiments>
</comment>
<comment type="interaction">
    <interactant intactId="EBI-7233259">
        <id>Q86UD4</id>
    </interactant>
    <interactant intactId="EBI-725997">
        <id>Q8WV44</id>
        <label>TRIM41</label>
    </interactant>
    <organismsDiffer>false</organismsDiffer>
    <experiments>4</experiments>
</comment>
<comment type="interaction">
    <interactant intactId="EBI-7233259">
        <id>Q86UD4</id>
    </interactant>
    <interactant intactId="EBI-947459">
        <id>Q9H2G4</id>
        <label>TSPYL2</label>
    </interactant>
    <organismsDiffer>false</organismsDiffer>
    <experiments>3</experiments>
</comment>
<comment type="interaction">
    <interactant intactId="EBI-7233259">
        <id>Q86UD4</id>
    </interactant>
    <interactant intactId="EBI-716093">
        <id>P13994</id>
        <label>YJU2B</label>
    </interactant>
    <organismsDiffer>false</organismsDiffer>
    <experiments>5</experiments>
</comment>
<comment type="interaction">
    <interactant intactId="EBI-7233259">
        <id>Q86UD4</id>
    </interactant>
    <interactant intactId="EBI-742740">
        <id>Q96BR9</id>
        <label>ZBTB8A</label>
    </interactant>
    <organismsDiffer>false</organismsDiffer>
    <experiments>3</experiments>
</comment>
<comment type="interaction">
    <interactant intactId="EBI-7233259">
        <id>Q86UD4</id>
    </interactant>
    <interactant intactId="EBI-10183064">
        <id>Q8N5A5-2</id>
        <label>ZGPAT</label>
    </interactant>
    <organismsDiffer>false</organismsDiffer>
    <experiments>3</experiments>
</comment>
<comment type="interaction">
    <interactant intactId="EBI-7233259">
        <id>Q86UD4</id>
    </interactant>
    <interactant intactId="EBI-17263125">
        <id>Q9NSD4</id>
        <label>ZNF275</label>
    </interactant>
    <organismsDiffer>false</organismsDiffer>
    <experiments>3</experiments>
</comment>
<comment type="subcellular location">
    <subcellularLocation>
        <location evidence="3">Nucleus</location>
    </subcellularLocation>
</comment>
<comment type="similarity">
    <text evidence="3">Belongs to the krueppel C2H2-type zinc-finger protein family.</text>
</comment>
<comment type="sequence caution" evidence="3">
    <conflict type="erroneous initiation">
        <sequence resource="EMBL-CDS" id="BAB14154"/>
    </conflict>
    <text>Truncated N-terminus.</text>
</comment>
<sequence length="541" mass="61725">MRLKMTTRNFPEREVPCDVEVERFTREVPCLSSLGDGWDCENQEGHLRQSALTLEKPGTQEAICEYPGFGEHLIASSDLPPSQRVLATNGFHAPDSNVSGLDCDPALPSYPKSYADKRTGDSDACGKGFNHSMEVIHGRNPVREKPYKYPESVKSFNHFTSLGHQKIMKRGKKSYEGKNFENIFTLSSSLNENQRNLPGEKQYRCTECGKCFKRNSSLVLHHRTHTGEKPYTCNECGKSFSKNYNLIVHQRIHTGEKPYECSKCGKAFSDGSALTQHQRIHTGEKPYECLECGKTFNRNSSLILHQRTHTGEKPYRCNECGKPFTDISHLTVHLRIHTGEKPYECSKCGKAFRDGSYLTQHERTHTGEKPFECAECGKSFNRNSHLIVHQKIHSGEKPYECKECGKTFIESAYLIRHQRIHTGEKPYGCNQCQKLFRNIAGLIRHQRTHTGEKPYECNQCGKAFRDSSCLTKHQRIHTKETPYQCPECGKSFKQNSHLAVHQRLHSREGPSRCPQCGKMFQKSSSLVRHQRAHLGEQPMET</sequence>
<keyword id="KW-0238">DNA-binding</keyword>
<keyword id="KW-0479">Metal-binding</keyword>
<keyword id="KW-0539">Nucleus</keyword>
<keyword id="KW-0597">Phosphoprotein</keyword>
<keyword id="KW-1267">Proteomics identification</keyword>
<keyword id="KW-1185">Reference proteome</keyword>
<keyword id="KW-0677">Repeat</keyword>
<keyword id="KW-0804">Transcription</keyword>
<keyword id="KW-0805">Transcription regulation</keyword>
<keyword id="KW-0862">Zinc</keyword>
<keyword id="KW-0863">Zinc-finger</keyword>
<proteinExistence type="evidence at protein level"/>
<protein>
    <recommendedName>
        <fullName>Zinc finger protein 329</fullName>
    </recommendedName>
</protein>
<accession>Q86UD4</accession>
<accession>B3KR32</accession>
<accession>Q9H9R7</accession>
<reference key="1">
    <citation type="journal article" date="2004" name="Nat. Genet.">
        <title>Complete sequencing and characterization of 21,243 full-length human cDNAs.</title>
        <authorList>
            <person name="Ota T."/>
            <person name="Suzuki Y."/>
            <person name="Nishikawa T."/>
            <person name="Otsuki T."/>
            <person name="Sugiyama T."/>
            <person name="Irie R."/>
            <person name="Wakamatsu A."/>
            <person name="Hayashi K."/>
            <person name="Sato H."/>
            <person name="Nagai K."/>
            <person name="Kimura K."/>
            <person name="Makita H."/>
            <person name="Sekine M."/>
            <person name="Obayashi M."/>
            <person name="Nishi T."/>
            <person name="Shibahara T."/>
            <person name="Tanaka T."/>
            <person name="Ishii S."/>
            <person name="Yamamoto J."/>
            <person name="Saito K."/>
            <person name="Kawai Y."/>
            <person name="Isono Y."/>
            <person name="Nakamura Y."/>
            <person name="Nagahari K."/>
            <person name="Murakami K."/>
            <person name="Yasuda T."/>
            <person name="Iwayanagi T."/>
            <person name="Wagatsuma M."/>
            <person name="Shiratori A."/>
            <person name="Sudo H."/>
            <person name="Hosoiri T."/>
            <person name="Kaku Y."/>
            <person name="Kodaira H."/>
            <person name="Kondo H."/>
            <person name="Sugawara M."/>
            <person name="Takahashi M."/>
            <person name="Kanda K."/>
            <person name="Yokoi T."/>
            <person name="Furuya T."/>
            <person name="Kikkawa E."/>
            <person name="Omura Y."/>
            <person name="Abe K."/>
            <person name="Kamihara K."/>
            <person name="Katsuta N."/>
            <person name="Sato K."/>
            <person name="Tanikawa M."/>
            <person name="Yamazaki M."/>
            <person name="Ninomiya K."/>
            <person name="Ishibashi T."/>
            <person name="Yamashita H."/>
            <person name="Murakawa K."/>
            <person name="Fujimori K."/>
            <person name="Tanai H."/>
            <person name="Kimata M."/>
            <person name="Watanabe M."/>
            <person name="Hiraoka S."/>
            <person name="Chiba Y."/>
            <person name="Ishida S."/>
            <person name="Ono Y."/>
            <person name="Takiguchi S."/>
            <person name="Watanabe S."/>
            <person name="Yosida M."/>
            <person name="Hotuta T."/>
            <person name="Kusano J."/>
            <person name="Kanehori K."/>
            <person name="Takahashi-Fujii A."/>
            <person name="Hara H."/>
            <person name="Tanase T.-O."/>
            <person name="Nomura Y."/>
            <person name="Togiya S."/>
            <person name="Komai F."/>
            <person name="Hara R."/>
            <person name="Takeuchi K."/>
            <person name="Arita M."/>
            <person name="Imose N."/>
            <person name="Musashino K."/>
            <person name="Yuuki H."/>
            <person name="Oshima A."/>
            <person name="Sasaki N."/>
            <person name="Aotsuka S."/>
            <person name="Yoshikawa Y."/>
            <person name="Matsunawa H."/>
            <person name="Ichihara T."/>
            <person name="Shiohata N."/>
            <person name="Sano S."/>
            <person name="Moriya S."/>
            <person name="Momiyama H."/>
            <person name="Satoh N."/>
            <person name="Takami S."/>
            <person name="Terashima Y."/>
            <person name="Suzuki O."/>
            <person name="Nakagawa S."/>
            <person name="Senoh A."/>
            <person name="Mizoguchi H."/>
            <person name="Goto Y."/>
            <person name="Shimizu F."/>
            <person name="Wakebe H."/>
            <person name="Hishigaki H."/>
            <person name="Watanabe T."/>
            <person name="Sugiyama A."/>
            <person name="Takemoto M."/>
            <person name="Kawakami B."/>
            <person name="Yamazaki M."/>
            <person name="Watanabe K."/>
            <person name="Kumagai A."/>
            <person name="Itakura S."/>
            <person name="Fukuzumi Y."/>
            <person name="Fujimori Y."/>
            <person name="Komiyama M."/>
            <person name="Tashiro H."/>
            <person name="Tanigami A."/>
            <person name="Fujiwara T."/>
            <person name="Ono T."/>
            <person name="Yamada K."/>
            <person name="Fujii Y."/>
            <person name="Ozaki K."/>
            <person name="Hirao M."/>
            <person name="Ohmori Y."/>
            <person name="Kawabata A."/>
            <person name="Hikiji T."/>
            <person name="Kobatake N."/>
            <person name="Inagaki H."/>
            <person name="Ikema Y."/>
            <person name="Okamoto S."/>
            <person name="Okitani R."/>
            <person name="Kawakami T."/>
            <person name="Noguchi S."/>
            <person name="Itoh T."/>
            <person name="Shigeta K."/>
            <person name="Senba T."/>
            <person name="Matsumura K."/>
            <person name="Nakajima Y."/>
            <person name="Mizuno T."/>
            <person name="Morinaga M."/>
            <person name="Sasaki M."/>
            <person name="Togashi T."/>
            <person name="Oyama M."/>
            <person name="Hata H."/>
            <person name="Watanabe M."/>
            <person name="Komatsu T."/>
            <person name="Mizushima-Sugano J."/>
            <person name="Satoh T."/>
            <person name="Shirai Y."/>
            <person name="Takahashi Y."/>
            <person name="Nakagawa K."/>
            <person name="Okumura K."/>
            <person name="Nagase T."/>
            <person name="Nomura N."/>
            <person name="Kikuchi H."/>
            <person name="Masuho Y."/>
            <person name="Yamashita R."/>
            <person name="Nakai K."/>
            <person name="Yada T."/>
            <person name="Nakamura Y."/>
            <person name="Ohara O."/>
            <person name="Isogai T."/>
            <person name="Sugano S."/>
        </authorList>
    </citation>
    <scope>NUCLEOTIDE SEQUENCE [LARGE SCALE MRNA]</scope>
    <source>
        <tissue>Amygdala</tissue>
        <tissue>Brain</tissue>
        <tissue>Teratocarcinoma</tissue>
    </source>
</reference>
<reference key="2">
    <citation type="journal article" date="2004" name="Nature">
        <title>The DNA sequence and biology of human chromosome 19.</title>
        <authorList>
            <person name="Grimwood J."/>
            <person name="Gordon L.A."/>
            <person name="Olsen A.S."/>
            <person name="Terry A."/>
            <person name="Schmutz J."/>
            <person name="Lamerdin J.E."/>
            <person name="Hellsten U."/>
            <person name="Goodstein D."/>
            <person name="Couronne O."/>
            <person name="Tran-Gyamfi M."/>
            <person name="Aerts A."/>
            <person name="Altherr M."/>
            <person name="Ashworth L."/>
            <person name="Bajorek E."/>
            <person name="Black S."/>
            <person name="Branscomb E."/>
            <person name="Caenepeel S."/>
            <person name="Carrano A.V."/>
            <person name="Caoile C."/>
            <person name="Chan Y.M."/>
            <person name="Christensen M."/>
            <person name="Cleland C.A."/>
            <person name="Copeland A."/>
            <person name="Dalin E."/>
            <person name="Dehal P."/>
            <person name="Denys M."/>
            <person name="Detter J.C."/>
            <person name="Escobar J."/>
            <person name="Flowers D."/>
            <person name="Fotopulos D."/>
            <person name="Garcia C."/>
            <person name="Georgescu A.M."/>
            <person name="Glavina T."/>
            <person name="Gomez M."/>
            <person name="Gonzales E."/>
            <person name="Groza M."/>
            <person name="Hammon N."/>
            <person name="Hawkins T."/>
            <person name="Haydu L."/>
            <person name="Ho I."/>
            <person name="Huang W."/>
            <person name="Israni S."/>
            <person name="Jett J."/>
            <person name="Kadner K."/>
            <person name="Kimball H."/>
            <person name="Kobayashi A."/>
            <person name="Larionov V."/>
            <person name="Leem S.-H."/>
            <person name="Lopez F."/>
            <person name="Lou Y."/>
            <person name="Lowry S."/>
            <person name="Malfatti S."/>
            <person name="Martinez D."/>
            <person name="McCready P.M."/>
            <person name="Medina C."/>
            <person name="Morgan J."/>
            <person name="Nelson K."/>
            <person name="Nolan M."/>
            <person name="Ovcharenko I."/>
            <person name="Pitluck S."/>
            <person name="Pollard M."/>
            <person name="Popkie A.P."/>
            <person name="Predki P."/>
            <person name="Quan G."/>
            <person name="Ramirez L."/>
            <person name="Rash S."/>
            <person name="Retterer J."/>
            <person name="Rodriguez A."/>
            <person name="Rogers S."/>
            <person name="Salamov A."/>
            <person name="Salazar A."/>
            <person name="She X."/>
            <person name="Smith D."/>
            <person name="Slezak T."/>
            <person name="Solovyev V."/>
            <person name="Thayer N."/>
            <person name="Tice H."/>
            <person name="Tsai M."/>
            <person name="Ustaszewska A."/>
            <person name="Vo N."/>
            <person name="Wagner M."/>
            <person name="Wheeler J."/>
            <person name="Wu K."/>
            <person name="Xie G."/>
            <person name="Yang J."/>
            <person name="Dubchak I."/>
            <person name="Furey T.S."/>
            <person name="DeJong P."/>
            <person name="Dickson M."/>
            <person name="Gordon D."/>
            <person name="Eichler E.E."/>
            <person name="Pennacchio L.A."/>
            <person name="Richardson P."/>
            <person name="Stubbs L."/>
            <person name="Rokhsar D.S."/>
            <person name="Myers R.M."/>
            <person name="Rubin E.M."/>
            <person name="Lucas S.M."/>
        </authorList>
    </citation>
    <scope>NUCLEOTIDE SEQUENCE [LARGE SCALE GENOMIC DNA]</scope>
</reference>
<reference key="3">
    <citation type="submission" date="2005-07" db="EMBL/GenBank/DDBJ databases">
        <authorList>
            <person name="Mural R.J."/>
            <person name="Istrail S."/>
            <person name="Sutton G.G."/>
            <person name="Florea L."/>
            <person name="Halpern A.L."/>
            <person name="Mobarry C.M."/>
            <person name="Lippert R."/>
            <person name="Walenz B."/>
            <person name="Shatkay H."/>
            <person name="Dew I."/>
            <person name="Miller J.R."/>
            <person name="Flanigan M.J."/>
            <person name="Edwards N.J."/>
            <person name="Bolanos R."/>
            <person name="Fasulo D."/>
            <person name="Halldorsson B.V."/>
            <person name="Hannenhalli S."/>
            <person name="Turner R."/>
            <person name="Yooseph S."/>
            <person name="Lu F."/>
            <person name="Nusskern D.R."/>
            <person name="Shue B.C."/>
            <person name="Zheng X.H."/>
            <person name="Zhong F."/>
            <person name="Delcher A.L."/>
            <person name="Huson D.H."/>
            <person name="Kravitz S.A."/>
            <person name="Mouchard L."/>
            <person name="Reinert K."/>
            <person name="Remington K.A."/>
            <person name="Clark A.G."/>
            <person name="Waterman M.S."/>
            <person name="Eichler E.E."/>
            <person name="Adams M.D."/>
            <person name="Hunkapiller M.W."/>
            <person name="Myers E.W."/>
            <person name="Venter J.C."/>
        </authorList>
    </citation>
    <scope>NUCLEOTIDE SEQUENCE [LARGE SCALE GENOMIC DNA]</scope>
</reference>
<reference key="4">
    <citation type="journal article" date="2004" name="Genome Res.">
        <title>The status, quality, and expansion of the NIH full-length cDNA project: the Mammalian Gene Collection (MGC).</title>
        <authorList>
            <consortium name="The MGC Project Team"/>
        </authorList>
    </citation>
    <scope>NUCLEOTIDE SEQUENCE [LARGE SCALE MRNA]</scope>
    <source>
        <tissue>Testis</tissue>
    </source>
</reference>
<evidence type="ECO:0000250" key="1">
    <source>
        <dbReference type="UniProtKB" id="Q6GQR8"/>
    </source>
</evidence>
<evidence type="ECO:0000255" key="2">
    <source>
        <dbReference type="PROSITE-ProRule" id="PRU00042"/>
    </source>
</evidence>
<evidence type="ECO:0000305" key="3"/>
<gene>
    <name type="primary">ZNF329</name>
</gene>
<feature type="chain" id="PRO_0000307288" description="Zinc finger protein 329">
    <location>
        <begin position="1"/>
        <end position="541"/>
    </location>
</feature>
<feature type="zinc finger region" description="C2H2-type 1" evidence="2">
    <location>
        <begin position="203"/>
        <end position="225"/>
    </location>
</feature>
<feature type="zinc finger region" description="C2H2-type 2" evidence="2">
    <location>
        <begin position="231"/>
        <end position="253"/>
    </location>
</feature>
<feature type="zinc finger region" description="C2H2-type 3" evidence="2">
    <location>
        <begin position="259"/>
        <end position="281"/>
    </location>
</feature>
<feature type="zinc finger region" description="C2H2-type 4" evidence="2">
    <location>
        <begin position="287"/>
        <end position="309"/>
    </location>
</feature>
<feature type="zinc finger region" description="C2H2-type 5" evidence="2">
    <location>
        <begin position="315"/>
        <end position="337"/>
    </location>
</feature>
<feature type="zinc finger region" description="C2H2-type 6" evidence="2">
    <location>
        <begin position="343"/>
        <end position="365"/>
    </location>
</feature>
<feature type="zinc finger region" description="C2H2-type 7" evidence="2">
    <location>
        <begin position="371"/>
        <end position="393"/>
    </location>
</feature>
<feature type="zinc finger region" description="C2H2-type 8" evidence="2">
    <location>
        <begin position="399"/>
        <end position="421"/>
    </location>
</feature>
<feature type="zinc finger region" description="C2H2-type 9" evidence="2">
    <location>
        <begin position="427"/>
        <end position="449"/>
    </location>
</feature>
<feature type="zinc finger region" description="C2H2-type 10" evidence="2">
    <location>
        <begin position="455"/>
        <end position="477"/>
    </location>
</feature>
<feature type="zinc finger region" description="C2H2-type 11" evidence="2">
    <location>
        <begin position="483"/>
        <end position="505"/>
    </location>
</feature>
<feature type="zinc finger region" description="C2H2-type 12" evidence="2">
    <location>
        <begin position="511"/>
        <end position="533"/>
    </location>
</feature>
<feature type="modified residue" description="Phosphoserine" evidence="1">
    <location>
        <position position="50"/>
    </location>
</feature>
<feature type="sequence variant" id="VAR_060428" description="In dbSNP:rs2279333.">
    <original>S</original>
    <variation>N</variation>
    <location>
        <position position="99"/>
    </location>
</feature>
<feature type="sequence variant" id="VAR_035403" description="In dbSNP:rs34255209.">
    <original>N</original>
    <variation>D</variation>
    <location>
        <position position="182"/>
    </location>
</feature>
<feature type="sequence conflict" description="In Ref. 4; AAH47501." evidence="3" ref="4">
    <original>S</original>
    <variation>N</variation>
    <location>
        <position position="122"/>
    </location>
</feature>
<dbReference type="EMBL" id="AK022648">
    <property type="protein sequence ID" value="BAB14154.1"/>
    <property type="status" value="ALT_INIT"/>
    <property type="molecule type" value="mRNA"/>
</dbReference>
<dbReference type="EMBL" id="AK090893">
    <property type="protein sequence ID" value="BAG52244.1"/>
    <property type="molecule type" value="mRNA"/>
</dbReference>
<dbReference type="EMBL" id="AK096542">
    <property type="protein sequence ID" value="BAG53319.1"/>
    <property type="molecule type" value="mRNA"/>
</dbReference>
<dbReference type="EMBL" id="AC008751">
    <property type="status" value="NOT_ANNOTATED_CDS"/>
    <property type="molecule type" value="Genomic_DNA"/>
</dbReference>
<dbReference type="EMBL" id="CH471135">
    <property type="protein sequence ID" value="EAW72560.1"/>
    <property type="molecule type" value="Genomic_DNA"/>
</dbReference>
<dbReference type="EMBL" id="BC047501">
    <property type="protein sequence ID" value="AAH47501.1"/>
    <property type="molecule type" value="mRNA"/>
</dbReference>
<dbReference type="CCDS" id="CCDS12972.1"/>
<dbReference type="RefSeq" id="NP_078896.3">
    <property type="nucleotide sequence ID" value="NM_024620.3"/>
</dbReference>
<dbReference type="RefSeq" id="XP_006723444.1">
    <property type="nucleotide sequence ID" value="XM_006723381.3"/>
</dbReference>
<dbReference type="RefSeq" id="XP_006723445.1">
    <property type="nucleotide sequence ID" value="XM_006723382.4"/>
</dbReference>
<dbReference type="RefSeq" id="XP_006723446.1">
    <property type="nucleotide sequence ID" value="XM_006723383.4"/>
</dbReference>
<dbReference type="RefSeq" id="XP_006723447.1">
    <property type="nucleotide sequence ID" value="XM_006723384.4"/>
</dbReference>
<dbReference type="RefSeq" id="XP_011525617.1">
    <property type="nucleotide sequence ID" value="XM_011527315.1"/>
</dbReference>
<dbReference type="RefSeq" id="XP_011525618.1">
    <property type="nucleotide sequence ID" value="XM_011527316.3"/>
</dbReference>
<dbReference type="RefSeq" id="XP_016882796.1">
    <property type="nucleotide sequence ID" value="XM_017027307.1"/>
</dbReference>
<dbReference type="RefSeq" id="XP_016882797.1">
    <property type="nucleotide sequence ID" value="XM_017027308.1"/>
</dbReference>
<dbReference type="RefSeq" id="XP_016882798.1">
    <property type="nucleotide sequence ID" value="XM_017027309.1"/>
</dbReference>
<dbReference type="RefSeq" id="XP_016882799.1">
    <property type="nucleotide sequence ID" value="XM_017027310.1"/>
</dbReference>
<dbReference type="RefSeq" id="XP_016882800.1">
    <property type="nucleotide sequence ID" value="XM_017027311.1"/>
</dbReference>
<dbReference type="RefSeq" id="XP_054178139.1">
    <property type="nucleotide sequence ID" value="XM_054322164.1"/>
</dbReference>
<dbReference type="RefSeq" id="XP_054178140.1">
    <property type="nucleotide sequence ID" value="XM_054322165.1"/>
</dbReference>
<dbReference type="RefSeq" id="XP_054178141.1">
    <property type="nucleotide sequence ID" value="XM_054322166.1"/>
</dbReference>
<dbReference type="RefSeq" id="XP_054178142.1">
    <property type="nucleotide sequence ID" value="XM_054322167.1"/>
</dbReference>
<dbReference type="RefSeq" id="XP_054178143.1">
    <property type="nucleotide sequence ID" value="XM_054322168.1"/>
</dbReference>
<dbReference type="SMR" id="Q86UD4"/>
<dbReference type="BioGRID" id="122798">
    <property type="interactions" value="31"/>
</dbReference>
<dbReference type="FunCoup" id="Q86UD4">
    <property type="interactions" value="71"/>
</dbReference>
<dbReference type="IntAct" id="Q86UD4">
    <property type="interactions" value="25"/>
</dbReference>
<dbReference type="MINT" id="Q86UD4"/>
<dbReference type="STRING" id="9606.ENSP00000470323"/>
<dbReference type="iPTMnet" id="Q86UD4"/>
<dbReference type="PhosphoSitePlus" id="Q86UD4"/>
<dbReference type="BioMuta" id="ZNF329"/>
<dbReference type="DMDM" id="296453050"/>
<dbReference type="jPOST" id="Q86UD4"/>
<dbReference type="MassIVE" id="Q86UD4"/>
<dbReference type="PaxDb" id="9606-ENSP00000470323"/>
<dbReference type="PeptideAtlas" id="Q86UD4"/>
<dbReference type="ProteomicsDB" id="69802"/>
<dbReference type="Antibodypedia" id="19680">
    <property type="antibodies" value="212 antibodies from 24 providers"/>
</dbReference>
<dbReference type="DNASU" id="79673"/>
<dbReference type="Ensembl" id="ENST00000358067.5">
    <property type="protein sequence ID" value="ENSP00000350773.4"/>
    <property type="gene ID" value="ENSG00000181894.15"/>
</dbReference>
<dbReference type="Ensembl" id="ENST00000500161.2">
    <property type="protein sequence ID" value="ENSP00000439527.1"/>
    <property type="gene ID" value="ENSG00000181894.15"/>
</dbReference>
<dbReference type="Ensembl" id="ENST00000597186.5">
    <property type="protein sequence ID" value="ENSP00000470323.1"/>
    <property type="gene ID" value="ENSG00000181894.15"/>
</dbReference>
<dbReference type="Ensembl" id="ENST00000598312.6">
    <property type="protein sequence ID" value="ENSP00000470008.1"/>
    <property type="gene ID" value="ENSG00000181894.15"/>
</dbReference>
<dbReference type="GeneID" id="79673"/>
<dbReference type="KEGG" id="hsa:79673"/>
<dbReference type="MANE-Select" id="ENST00000598312.6">
    <property type="protein sequence ID" value="ENSP00000470008.1"/>
    <property type="RefSeq nucleotide sequence ID" value="NM_024620.4"/>
    <property type="RefSeq protein sequence ID" value="NP_078896.3"/>
</dbReference>
<dbReference type="UCSC" id="uc002qrn.4">
    <property type="organism name" value="human"/>
</dbReference>
<dbReference type="AGR" id="HGNC:14209"/>
<dbReference type="CTD" id="79673"/>
<dbReference type="DisGeNET" id="79673"/>
<dbReference type="GeneCards" id="ZNF329"/>
<dbReference type="HGNC" id="HGNC:14209">
    <property type="gene designation" value="ZNF329"/>
</dbReference>
<dbReference type="HPA" id="ENSG00000181894">
    <property type="expression patterns" value="Low tissue specificity"/>
</dbReference>
<dbReference type="neXtProt" id="NX_Q86UD4"/>
<dbReference type="OpenTargets" id="ENSG00000181894"/>
<dbReference type="PharmGKB" id="PA37858"/>
<dbReference type="VEuPathDB" id="HostDB:ENSG00000181894"/>
<dbReference type="eggNOG" id="KOG1721">
    <property type="taxonomic scope" value="Eukaryota"/>
</dbReference>
<dbReference type="GeneTree" id="ENSGT00940000162872"/>
<dbReference type="HOGENOM" id="CLU_002678_44_5_1"/>
<dbReference type="InParanoid" id="Q86UD4"/>
<dbReference type="OMA" id="GEQKIMK"/>
<dbReference type="OrthoDB" id="6591996at2759"/>
<dbReference type="PAN-GO" id="Q86UD4">
    <property type="GO annotations" value="3 GO annotations based on evolutionary models"/>
</dbReference>
<dbReference type="PhylomeDB" id="Q86UD4"/>
<dbReference type="TreeFam" id="TF341817"/>
<dbReference type="PathwayCommons" id="Q86UD4"/>
<dbReference type="SignaLink" id="Q86UD4"/>
<dbReference type="BioGRID-ORCS" id="79673">
    <property type="hits" value="13 hits in 1181 CRISPR screens"/>
</dbReference>
<dbReference type="ChiTaRS" id="ZNF329">
    <property type="organism name" value="human"/>
</dbReference>
<dbReference type="GenomeRNAi" id="79673"/>
<dbReference type="Pharos" id="Q86UD4">
    <property type="development level" value="Tdark"/>
</dbReference>
<dbReference type="PRO" id="PR:Q86UD4"/>
<dbReference type="Proteomes" id="UP000005640">
    <property type="component" value="Chromosome 19"/>
</dbReference>
<dbReference type="RNAct" id="Q86UD4">
    <property type="molecule type" value="protein"/>
</dbReference>
<dbReference type="Bgee" id="ENSG00000181894">
    <property type="expression patterns" value="Expressed in endothelial cell and 192 other cell types or tissues"/>
</dbReference>
<dbReference type="ExpressionAtlas" id="Q86UD4">
    <property type="expression patterns" value="baseline and differential"/>
</dbReference>
<dbReference type="GO" id="GO:0005634">
    <property type="term" value="C:nucleus"/>
    <property type="evidence" value="ECO:0000318"/>
    <property type="project" value="GO_Central"/>
</dbReference>
<dbReference type="GO" id="GO:0001228">
    <property type="term" value="F:DNA-binding transcription activator activity, RNA polymerase II-specific"/>
    <property type="evidence" value="ECO:0000318"/>
    <property type="project" value="GO_Central"/>
</dbReference>
<dbReference type="GO" id="GO:0003700">
    <property type="term" value="F:DNA-binding transcription factor activity"/>
    <property type="evidence" value="ECO:0000303"/>
    <property type="project" value="ARUK-UCL"/>
</dbReference>
<dbReference type="GO" id="GO:0000978">
    <property type="term" value="F:RNA polymerase II cis-regulatory region sequence-specific DNA binding"/>
    <property type="evidence" value="ECO:0000318"/>
    <property type="project" value="GO_Central"/>
</dbReference>
<dbReference type="GO" id="GO:0008270">
    <property type="term" value="F:zinc ion binding"/>
    <property type="evidence" value="ECO:0007669"/>
    <property type="project" value="UniProtKB-KW"/>
</dbReference>
<dbReference type="GO" id="GO:0006357">
    <property type="term" value="P:regulation of transcription by RNA polymerase II"/>
    <property type="evidence" value="ECO:0000318"/>
    <property type="project" value="GO_Central"/>
</dbReference>
<dbReference type="FunFam" id="3.30.160.60:FF:004935">
    <property type="match status" value="1"/>
</dbReference>
<dbReference type="FunFam" id="3.30.160.60:FF:000295">
    <property type="entry name" value="zinc finger protein 19"/>
    <property type="match status" value="1"/>
</dbReference>
<dbReference type="FunFam" id="3.30.160.60:FF:000999">
    <property type="entry name" value="zinc finger protein 2 homolog"/>
    <property type="match status" value="1"/>
</dbReference>
<dbReference type="FunFam" id="3.30.160.60:FF:000352">
    <property type="entry name" value="zinc finger protein 3 homolog"/>
    <property type="match status" value="1"/>
</dbReference>
<dbReference type="FunFam" id="3.30.160.60:FF:001078">
    <property type="entry name" value="Zinc finger protein 329"/>
    <property type="match status" value="1"/>
</dbReference>
<dbReference type="FunFam" id="3.30.160.60:FF:001585">
    <property type="entry name" value="Zinc finger protein 329"/>
    <property type="match status" value="1"/>
</dbReference>
<dbReference type="FunFam" id="3.30.160.60:FF:001675">
    <property type="entry name" value="Zinc finger protein 329"/>
    <property type="match status" value="1"/>
</dbReference>
<dbReference type="FunFam" id="3.30.160.60:FF:001974">
    <property type="entry name" value="zinc finger protein 329"/>
    <property type="match status" value="1"/>
</dbReference>
<dbReference type="FunFam" id="3.30.160.60:FF:002343">
    <property type="entry name" value="Zinc finger protein 33A"/>
    <property type="match status" value="2"/>
</dbReference>
<dbReference type="FunFam" id="3.30.160.60:FF:002402">
    <property type="entry name" value="Zinc finger protein 347"/>
    <property type="match status" value="1"/>
</dbReference>
<dbReference type="FunFam" id="3.30.160.60:FF:000950">
    <property type="entry name" value="Zinc finger protein 48"/>
    <property type="match status" value="1"/>
</dbReference>
<dbReference type="FunFam" id="3.30.160.60:FF:002254">
    <property type="entry name" value="Zinc finger protein 540"/>
    <property type="match status" value="1"/>
</dbReference>
<dbReference type="Gene3D" id="3.30.160.60">
    <property type="entry name" value="Classic Zinc Finger"/>
    <property type="match status" value="12"/>
</dbReference>
<dbReference type="InterPro" id="IPR050589">
    <property type="entry name" value="Ikaros_C2H2-ZF"/>
</dbReference>
<dbReference type="InterPro" id="IPR036236">
    <property type="entry name" value="Znf_C2H2_sf"/>
</dbReference>
<dbReference type="InterPro" id="IPR013087">
    <property type="entry name" value="Znf_C2H2_type"/>
</dbReference>
<dbReference type="PANTHER" id="PTHR24404">
    <property type="entry name" value="ZINC FINGER PROTEIN"/>
    <property type="match status" value="1"/>
</dbReference>
<dbReference type="PANTHER" id="PTHR24404:SF97">
    <property type="entry name" value="ZINC FINGER PROTEIN 350"/>
    <property type="match status" value="1"/>
</dbReference>
<dbReference type="Pfam" id="PF00096">
    <property type="entry name" value="zf-C2H2"/>
    <property type="match status" value="12"/>
</dbReference>
<dbReference type="SMART" id="SM00355">
    <property type="entry name" value="ZnF_C2H2"/>
    <property type="match status" value="12"/>
</dbReference>
<dbReference type="SUPFAM" id="SSF57667">
    <property type="entry name" value="beta-beta-alpha zinc fingers"/>
    <property type="match status" value="8"/>
</dbReference>
<dbReference type="PROSITE" id="PS00028">
    <property type="entry name" value="ZINC_FINGER_C2H2_1"/>
    <property type="match status" value="12"/>
</dbReference>
<dbReference type="PROSITE" id="PS50157">
    <property type="entry name" value="ZINC_FINGER_C2H2_2"/>
    <property type="match status" value="12"/>
</dbReference>
<name>ZN329_HUMAN</name>
<organism>
    <name type="scientific">Homo sapiens</name>
    <name type="common">Human</name>
    <dbReference type="NCBI Taxonomy" id="9606"/>
    <lineage>
        <taxon>Eukaryota</taxon>
        <taxon>Metazoa</taxon>
        <taxon>Chordata</taxon>
        <taxon>Craniata</taxon>
        <taxon>Vertebrata</taxon>
        <taxon>Euteleostomi</taxon>
        <taxon>Mammalia</taxon>
        <taxon>Eutheria</taxon>
        <taxon>Euarchontoglires</taxon>
        <taxon>Primates</taxon>
        <taxon>Haplorrhini</taxon>
        <taxon>Catarrhini</taxon>
        <taxon>Hominidae</taxon>
        <taxon>Homo</taxon>
    </lineage>
</organism>